<accession>A1JSF0</accession>
<sequence length="278" mass="31336">MVRVIAISNLRLAQAFVDYMATRHVALEVKPDSQGAEIWLTDDEQLPQVQHELEQFLLDPLNPRYQAASWQSGNLHSNLPYQRFSYLQTLRSQAGPLTLSVMVLCIAIYILMQIVGDGAVMSWLAWPRDNSQYLQIWRWVSHAFLHFSLLHILFNLMWWWYLAGQMEKRLGTGKLLVLTIVSALFSGWGQSLFSGVNFGGLSGVVYALMGYVWLTGERAPERGISLPRGLMAFSVLWLVAGYFDILGLSIANAAHVSGLIIGLLMAFWDTRNSAKTTQ</sequence>
<gene>
    <name evidence="1" type="primary">glpG</name>
    <name type="ordered locus">YE3988</name>
</gene>
<keyword id="KW-0997">Cell inner membrane</keyword>
<keyword id="KW-1003">Cell membrane</keyword>
<keyword id="KW-0378">Hydrolase</keyword>
<keyword id="KW-0472">Membrane</keyword>
<keyword id="KW-0645">Protease</keyword>
<keyword id="KW-0720">Serine protease</keyword>
<keyword id="KW-0812">Transmembrane</keyword>
<keyword id="KW-1133">Transmembrane helix</keyword>
<comment type="function">
    <text evidence="1">Rhomboid-type serine protease that catalyzes intramembrane proteolysis.</text>
</comment>
<comment type="catalytic activity">
    <reaction evidence="1">
        <text>Cleaves type-1 transmembrane domains using a catalytic dyad composed of serine and histidine that are contributed by different transmembrane domains.</text>
        <dbReference type="EC" id="3.4.21.105"/>
    </reaction>
</comment>
<comment type="subcellular location">
    <subcellularLocation>
        <location evidence="1">Cell inner membrane</location>
        <topology evidence="1">Multi-pass membrane protein</topology>
    </subcellularLocation>
</comment>
<comment type="similarity">
    <text evidence="1">Belongs to the peptidase S54 family.</text>
</comment>
<feature type="chain" id="PRO_0000321699" description="Rhomboid protease GlpG">
    <location>
        <begin position="1"/>
        <end position="278"/>
    </location>
</feature>
<feature type="transmembrane region" description="Helical" evidence="1">
    <location>
        <begin position="95"/>
        <end position="115"/>
    </location>
</feature>
<feature type="transmembrane region" description="Helical" evidence="1">
    <location>
        <begin position="143"/>
        <end position="163"/>
    </location>
</feature>
<feature type="transmembrane region" description="Helical" evidence="1">
    <location>
        <begin position="170"/>
        <end position="190"/>
    </location>
</feature>
<feature type="transmembrane region" description="Helical" evidence="1">
    <location>
        <begin position="192"/>
        <end position="212"/>
    </location>
</feature>
<feature type="transmembrane region" description="Helical" evidence="1">
    <location>
        <begin position="224"/>
        <end position="241"/>
    </location>
</feature>
<feature type="transmembrane region" description="Helical" evidence="1">
    <location>
        <begin position="245"/>
        <end position="267"/>
    </location>
</feature>
<feature type="active site" description="Nucleophile" evidence="1">
    <location>
        <position position="202"/>
    </location>
</feature>
<feature type="active site" evidence="1">
    <location>
        <position position="255"/>
    </location>
</feature>
<reference key="1">
    <citation type="journal article" date="2006" name="PLoS Genet.">
        <title>The complete genome sequence and comparative genome analysis of the high pathogenicity Yersinia enterocolitica strain 8081.</title>
        <authorList>
            <person name="Thomson N.R."/>
            <person name="Howard S."/>
            <person name="Wren B.W."/>
            <person name="Holden M.T.G."/>
            <person name="Crossman L."/>
            <person name="Challis G.L."/>
            <person name="Churcher C."/>
            <person name="Mungall K."/>
            <person name="Brooks K."/>
            <person name="Chillingworth T."/>
            <person name="Feltwell T."/>
            <person name="Abdellah Z."/>
            <person name="Hauser H."/>
            <person name="Jagels K."/>
            <person name="Maddison M."/>
            <person name="Moule S."/>
            <person name="Sanders M."/>
            <person name="Whitehead S."/>
            <person name="Quail M.A."/>
            <person name="Dougan G."/>
            <person name="Parkhill J."/>
            <person name="Prentice M.B."/>
        </authorList>
    </citation>
    <scope>NUCLEOTIDE SEQUENCE [LARGE SCALE GENOMIC DNA]</scope>
    <source>
        <strain>NCTC 13174 / 8081</strain>
    </source>
</reference>
<name>GLPG_YERE8</name>
<organism>
    <name type="scientific">Yersinia enterocolitica serotype O:8 / biotype 1B (strain NCTC 13174 / 8081)</name>
    <dbReference type="NCBI Taxonomy" id="393305"/>
    <lineage>
        <taxon>Bacteria</taxon>
        <taxon>Pseudomonadati</taxon>
        <taxon>Pseudomonadota</taxon>
        <taxon>Gammaproteobacteria</taxon>
        <taxon>Enterobacterales</taxon>
        <taxon>Yersiniaceae</taxon>
        <taxon>Yersinia</taxon>
    </lineage>
</organism>
<dbReference type="EC" id="3.4.21.105" evidence="1"/>
<dbReference type="EMBL" id="AM286415">
    <property type="protein sequence ID" value="CAL14008.1"/>
    <property type="molecule type" value="Genomic_DNA"/>
</dbReference>
<dbReference type="RefSeq" id="WP_005174723.1">
    <property type="nucleotide sequence ID" value="NC_008800.1"/>
</dbReference>
<dbReference type="RefSeq" id="YP_001008134.1">
    <property type="nucleotide sequence ID" value="NC_008800.1"/>
</dbReference>
<dbReference type="SMR" id="A1JSF0"/>
<dbReference type="MEROPS" id="S54.016"/>
<dbReference type="KEGG" id="yen:YE3988"/>
<dbReference type="PATRIC" id="fig|393305.7.peg.4246"/>
<dbReference type="eggNOG" id="COG0705">
    <property type="taxonomic scope" value="Bacteria"/>
</dbReference>
<dbReference type="HOGENOM" id="CLU_058989_0_0_6"/>
<dbReference type="OrthoDB" id="9778341at2"/>
<dbReference type="Proteomes" id="UP000000642">
    <property type="component" value="Chromosome"/>
</dbReference>
<dbReference type="GO" id="GO:0005886">
    <property type="term" value="C:plasma membrane"/>
    <property type="evidence" value="ECO:0007669"/>
    <property type="project" value="UniProtKB-SubCell"/>
</dbReference>
<dbReference type="GO" id="GO:0004252">
    <property type="term" value="F:serine-type endopeptidase activity"/>
    <property type="evidence" value="ECO:0007669"/>
    <property type="project" value="UniProtKB-UniRule"/>
</dbReference>
<dbReference type="GO" id="GO:0006508">
    <property type="term" value="P:proteolysis"/>
    <property type="evidence" value="ECO:0007669"/>
    <property type="project" value="UniProtKB-UniRule"/>
</dbReference>
<dbReference type="Gene3D" id="3.30.70.2350">
    <property type="match status" value="1"/>
</dbReference>
<dbReference type="Gene3D" id="1.20.1540.10">
    <property type="entry name" value="Rhomboid-like"/>
    <property type="match status" value="1"/>
</dbReference>
<dbReference type="HAMAP" id="MF_01594">
    <property type="entry name" value="Rhomboid_GlpG"/>
    <property type="match status" value="1"/>
</dbReference>
<dbReference type="InterPro" id="IPR038236">
    <property type="entry name" value="GlpG_N_sf"/>
</dbReference>
<dbReference type="InterPro" id="IPR022732">
    <property type="entry name" value="Peptidase_S54_GlpG_N"/>
</dbReference>
<dbReference type="InterPro" id="IPR022764">
    <property type="entry name" value="Peptidase_S54_rhomboid_dom"/>
</dbReference>
<dbReference type="InterPro" id="IPR035952">
    <property type="entry name" value="Rhomboid-like_sf"/>
</dbReference>
<dbReference type="InterPro" id="IPR023662">
    <property type="entry name" value="Rhomboid_protease_GlpG"/>
</dbReference>
<dbReference type="NCBIfam" id="NF008155">
    <property type="entry name" value="PRK10907.1"/>
    <property type="match status" value="1"/>
</dbReference>
<dbReference type="NCBIfam" id="TIGR04239">
    <property type="entry name" value="rhombo_GlpG"/>
    <property type="match status" value="1"/>
</dbReference>
<dbReference type="PANTHER" id="PTHR43066:SF26">
    <property type="entry name" value="RHOMBOID PROTEASE GLPG"/>
    <property type="match status" value="1"/>
</dbReference>
<dbReference type="PANTHER" id="PTHR43066">
    <property type="entry name" value="RHOMBOID-RELATED PROTEIN"/>
    <property type="match status" value="1"/>
</dbReference>
<dbReference type="Pfam" id="PF01694">
    <property type="entry name" value="Rhomboid"/>
    <property type="match status" value="1"/>
</dbReference>
<dbReference type="Pfam" id="PF12122">
    <property type="entry name" value="Rhomboid_N"/>
    <property type="match status" value="1"/>
</dbReference>
<dbReference type="SUPFAM" id="SSF144091">
    <property type="entry name" value="Rhomboid-like"/>
    <property type="match status" value="1"/>
</dbReference>
<evidence type="ECO:0000255" key="1">
    <source>
        <dbReference type="HAMAP-Rule" id="MF_01594"/>
    </source>
</evidence>
<protein>
    <recommendedName>
        <fullName evidence="1">Rhomboid protease GlpG</fullName>
        <ecNumber evidence="1">3.4.21.105</ecNumber>
    </recommendedName>
    <alternativeName>
        <fullName evidence="1">Intramembrane serine protease</fullName>
    </alternativeName>
</protein>
<proteinExistence type="inferred from homology"/>